<feature type="chain" id="PRO_0000146112" description="EH domain-containing protein 3">
    <location>
        <begin position="1"/>
        <end position="535"/>
    </location>
</feature>
<feature type="domain" description="Dynamin-type G" evidence="8">
    <location>
        <begin position="55"/>
        <end position="286"/>
    </location>
</feature>
<feature type="domain" description="EH" evidence="6">
    <location>
        <begin position="444"/>
        <end position="532"/>
    </location>
</feature>
<feature type="domain" description="EF-hand" evidence="7">
    <location>
        <begin position="476"/>
        <end position="511"/>
    </location>
</feature>
<feature type="region of interest" description="G1 motif" evidence="8">
    <location>
        <begin position="65"/>
        <end position="72"/>
    </location>
</feature>
<feature type="region of interest" description="G2 motif" evidence="8">
    <location>
        <begin position="91"/>
        <end position="92"/>
    </location>
</feature>
<feature type="region of interest" description="G3 motif" evidence="8">
    <location>
        <begin position="153"/>
        <end position="156"/>
    </location>
</feature>
<feature type="region of interest" description="G4 motif" evidence="8">
    <location>
        <begin position="219"/>
        <end position="222"/>
    </location>
</feature>
<feature type="region of interest" description="G5 motif" evidence="8">
    <location>
        <position position="243"/>
    </location>
</feature>
<feature type="coiled-coil region" evidence="5">
    <location>
        <begin position="198"/>
        <end position="227"/>
    </location>
</feature>
<feature type="binding site" evidence="11">
    <location>
        <begin position="65"/>
        <end position="72"/>
    </location>
    <ligand>
        <name>ATP</name>
        <dbReference type="ChEBI" id="CHEBI:30616"/>
    </ligand>
</feature>
<feature type="binding site" evidence="1">
    <location>
        <position position="220"/>
    </location>
    <ligand>
        <name>ATP</name>
        <dbReference type="ChEBI" id="CHEBI:30616"/>
    </ligand>
</feature>
<feature type="binding site" evidence="1">
    <location>
        <position position="258"/>
    </location>
    <ligand>
        <name>ATP</name>
        <dbReference type="ChEBI" id="CHEBI:30616"/>
    </ligand>
</feature>
<feature type="binding site" evidence="7">
    <location>
        <position position="489"/>
    </location>
    <ligand>
        <name>Ca(2+)</name>
        <dbReference type="ChEBI" id="CHEBI:29108"/>
    </ligand>
</feature>
<feature type="binding site" evidence="7">
    <location>
        <position position="491"/>
    </location>
    <ligand>
        <name>Ca(2+)</name>
        <dbReference type="ChEBI" id="CHEBI:29108"/>
    </ligand>
</feature>
<feature type="binding site" evidence="7">
    <location>
        <position position="493"/>
    </location>
    <ligand>
        <name>Ca(2+)</name>
        <dbReference type="ChEBI" id="CHEBI:29108"/>
    </ligand>
</feature>
<feature type="binding site" evidence="7">
    <location>
        <position position="495"/>
    </location>
    <ligand>
        <name>Ca(2+)</name>
        <dbReference type="ChEBI" id="CHEBI:29108"/>
    </ligand>
</feature>
<feature type="binding site" evidence="7">
    <location>
        <position position="500"/>
    </location>
    <ligand>
        <name>Ca(2+)</name>
        <dbReference type="ChEBI" id="CHEBI:29108"/>
    </ligand>
</feature>
<feature type="modified residue" description="N-acetylmethionine" evidence="10">
    <location>
        <position position="1"/>
    </location>
</feature>
<feature type="modified residue" description="Phosphoserine" evidence="2">
    <location>
        <position position="349"/>
    </location>
</feature>
<feature type="modified residue" description="Phosphoserine" evidence="3">
    <location>
        <position position="456"/>
    </location>
</feature>
<feature type="cross-link" description="Glycyl lysine isopeptide (Lys-Gly) (interchain with G-Cter in SUMO)" evidence="21">
    <location>
        <position position="315"/>
    </location>
</feature>
<feature type="cross-link" description="Glycyl lysine isopeptide (Lys-Gly) (interchain with G-Cter in SUMO)" evidence="21">
    <location>
        <position position="511"/>
    </location>
</feature>
<feature type="splice variant" id="VSP_056606" description="In isoform 2." evidence="23">
    <original>YDFAAVL</original>
    <variation>PAAGPGL</variation>
    <location>
        <begin position="169"/>
        <end position="175"/>
    </location>
</feature>
<feature type="splice variant" id="VSP_056607" description="In isoform 2." evidence="23">
    <location>
        <begin position="176"/>
        <end position="535"/>
    </location>
</feature>
<feature type="mutagenesis site" description="Abolishes ATP-binding and localizes to cytoplasm." evidence="11">
    <original>G</original>
    <variation>R</variation>
    <location>
        <position position="65"/>
    </location>
</feature>
<feature type="mutagenesis site" description="Greatly reduces oligomerization and interaction with RAB11FIP2." evidence="11">
    <original>V</original>
    <variation>P</variation>
    <location>
        <position position="203"/>
    </location>
</feature>
<feature type="mutagenesis site" description="Abolishes sumoylation and localization to tubular structures of the ERC, impairs fast recycling activity from the ERC, no effect on homooligomerization; when associated with R-511." evidence="21">
    <original>K</original>
    <variation>R</variation>
    <location>
        <position position="315"/>
    </location>
</feature>
<feature type="mutagenesis site" description="Abolishes interaction with RAB11FIP2." evidence="11">
    <original>W</original>
    <variation>A</variation>
    <location>
        <position position="485"/>
    </location>
</feature>
<feature type="mutagenesis site" description="Abolishes sumoylation localization to tubular structures of the ERC, impairs fast recycling activity from the ERC, no effect on homooligomerization;; when associated with R-315." evidence="21">
    <original>K</original>
    <variation>R</variation>
    <location>
        <position position="511"/>
    </location>
</feature>
<organism>
    <name type="scientific">Homo sapiens</name>
    <name type="common">Human</name>
    <dbReference type="NCBI Taxonomy" id="9606"/>
    <lineage>
        <taxon>Eukaryota</taxon>
        <taxon>Metazoa</taxon>
        <taxon>Chordata</taxon>
        <taxon>Craniata</taxon>
        <taxon>Vertebrata</taxon>
        <taxon>Euteleostomi</taxon>
        <taxon>Mammalia</taxon>
        <taxon>Eutheria</taxon>
        <taxon>Euarchontoglires</taxon>
        <taxon>Primates</taxon>
        <taxon>Haplorrhini</taxon>
        <taxon>Catarrhini</taxon>
        <taxon>Hominidae</taxon>
        <taxon>Homo</taxon>
    </lineage>
</organism>
<proteinExistence type="evidence at protein level"/>
<reference key="1">
    <citation type="journal article" date="2000" name="Genomics">
        <title>EHD2, EHD3, and EHD4 encode novel members of a highly conserved family of EH domain-containing proteins.</title>
        <authorList>
            <person name="Pohl U."/>
            <person name="Smith J.S."/>
            <person name="Tachibana I."/>
            <person name="Ueki K."/>
            <person name="Lee H.K."/>
            <person name="Ramaswamy S."/>
            <person name="Wu Q."/>
            <person name="Mohrenweiser H.W."/>
            <person name="Jenkins R.B."/>
            <person name="Louis D.N."/>
        </authorList>
    </citation>
    <scope>NUCLEOTIDE SEQUENCE [MRNA] (ISOFORM 1)</scope>
    <scope>TISSUE SPECIFICITY</scope>
    <source>
        <tissue>Brain</tissue>
    </source>
</reference>
<reference key="2">
    <citation type="journal article" date="2002" name="Traffic">
        <title>EHD3: a protein that resides in recycling tubular and vesicular membrane structures and interacts with EHD1.</title>
        <authorList>
            <person name="Galperin E."/>
            <person name="Benjamin S."/>
            <person name="Rapaport D."/>
            <person name="Rotem-Yehudar R."/>
            <person name="Tolchinsky S."/>
            <person name="Horowitz M."/>
        </authorList>
    </citation>
    <scope>NUCLEOTIDE SEQUENCE [MRNA] (ISOFORM 1)</scope>
</reference>
<reference key="3">
    <citation type="journal article" date="2004" name="Nat. Genet.">
        <title>Complete sequencing and characterization of 21,243 full-length human cDNAs.</title>
        <authorList>
            <person name="Ota T."/>
            <person name="Suzuki Y."/>
            <person name="Nishikawa T."/>
            <person name="Otsuki T."/>
            <person name="Sugiyama T."/>
            <person name="Irie R."/>
            <person name="Wakamatsu A."/>
            <person name="Hayashi K."/>
            <person name="Sato H."/>
            <person name="Nagai K."/>
            <person name="Kimura K."/>
            <person name="Makita H."/>
            <person name="Sekine M."/>
            <person name="Obayashi M."/>
            <person name="Nishi T."/>
            <person name="Shibahara T."/>
            <person name="Tanaka T."/>
            <person name="Ishii S."/>
            <person name="Yamamoto J."/>
            <person name="Saito K."/>
            <person name="Kawai Y."/>
            <person name="Isono Y."/>
            <person name="Nakamura Y."/>
            <person name="Nagahari K."/>
            <person name="Murakami K."/>
            <person name="Yasuda T."/>
            <person name="Iwayanagi T."/>
            <person name="Wagatsuma M."/>
            <person name="Shiratori A."/>
            <person name="Sudo H."/>
            <person name="Hosoiri T."/>
            <person name="Kaku Y."/>
            <person name="Kodaira H."/>
            <person name="Kondo H."/>
            <person name="Sugawara M."/>
            <person name="Takahashi M."/>
            <person name="Kanda K."/>
            <person name="Yokoi T."/>
            <person name="Furuya T."/>
            <person name="Kikkawa E."/>
            <person name="Omura Y."/>
            <person name="Abe K."/>
            <person name="Kamihara K."/>
            <person name="Katsuta N."/>
            <person name="Sato K."/>
            <person name="Tanikawa M."/>
            <person name="Yamazaki M."/>
            <person name="Ninomiya K."/>
            <person name="Ishibashi T."/>
            <person name="Yamashita H."/>
            <person name="Murakawa K."/>
            <person name="Fujimori K."/>
            <person name="Tanai H."/>
            <person name="Kimata M."/>
            <person name="Watanabe M."/>
            <person name="Hiraoka S."/>
            <person name="Chiba Y."/>
            <person name="Ishida S."/>
            <person name="Ono Y."/>
            <person name="Takiguchi S."/>
            <person name="Watanabe S."/>
            <person name="Yosida M."/>
            <person name="Hotuta T."/>
            <person name="Kusano J."/>
            <person name="Kanehori K."/>
            <person name="Takahashi-Fujii A."/>
            <person name="Hara H."/>
            <person name="Tanase T.-O."/>
            <person name="Nomura Y."/>
            <person name="Togiya S."/>
            <person name="Komai F."/>
            <person name="Hara R."/>
            <person name="Takeuchi K."/>
            <person name="Arita M."/>
            <person name="Imose N."/>
            <person name="Musashino K."/>
            <person name="Yuuki H."/>
            <person name="Oshima A."/>
            <person name="Sasaki N."/>
            <person name="Aotsuka S."/>
            <person name="Yoshikawa Y."/>
            <person name="Matsunawa H."/>
            <person name="Ichihara T."/>
            <person name="Shiohata N."/>
            <person name="Sano S."/>
            <person name="Moriya S."/>
            <person name="Momiyama H."/>
            <person name="Satoh N."/>
            <person name="Takami S."/>
            <person name="Terashima Y."/>
            <person name="Suzuki O."/>
            <person name="Nakagawa S."/>
            <person name="Senoh A."/>
            <person name="Mizoguchi H."/>
            <person name="Goto Y."/>
            <person name="Shimizu F."/>
            <person name="Wakebe H."/>
            <person name="Hishigaki H."/>
            <person name="Watanabe T."/>
            <person name="Sugiyama A."/>
            <person name="Takemoto M."/>
            <person name="Kawakami B."/>
            <person name="Yamazaki M."/>
            <person name="Watanabe K."/>
            <person name="Kumagai A."/>
            <person name="Itakura S."/>
            <person name="Fukuzumi Y."/>
            <person name="Fujimori Y."/>
            <person name="Komiyama M."/>
            <person name="Tashiro H."/>
            <person name="Tanigami A."/>
            <person name="Fujiwara T."/>
            <person name="Ono T."/>
            <person name="Yamada K."/>
            <person name="Fujii Y."/>
            <person name="Ozaki K."/>
            <person name="Hirao M."/>
            <person name="Ohmori Y."/>
            <person name="Kawabata A."/>
            <person name="Hikiji T."/>
            <person name="Kobatake N."/>
            <person name="Inagaki H."/>
            <person name="Ikema Y."/>
            <person name="Okamoto S."/>
            <person name="Okitani R."/>
            <person name="Kawakami T."/>
            <person name="Noguchi S."/>
            <person name="Itoh T."/>
            <person name="Shigeta K."/>
            <person name="Senba T."/>
            <person name="Matsumura K."/>
            <person name="Nakajima Y."/>
            <person name="Mizuno T."/>
            <person name="Morinaga M."/>
            <person name="Sasaki M."/>
            <person name="Togashi T."/>
            <person name="Oyama M."/>
            <person name="Hata H."/>
            <person name="Watanabe M."/>
            <person name="Komatsu T."/>
            <person name="Mizushima-Sugano J."/>
            <person name="Satoh T."/>
            <person name="Shirai Y."/>
            <person name="Takahashi Y."/>
            <person name="Nakagawa K."/>
            <person name="Okumura K."/>
            <person name="Nagase T."/>
            <person name="Nomura N."/>
            <person name="Kikuchi H."/>
            <person name="Masuho Y."/>
            <person name="Yamashita R."/>
            <person name="Nakai K."/>
            <person name="Yada T."/>
            <person name="Nakamura Y."/>
            <person name="Ohara O."/>
            <person name="Isogai T."/>
            <person name="Sugano S."/>
        </authorList>
    </citation>
    <scope>NUCLEOTIDE SEQUENCE [LARGE SCALE MRNA] (ISOFORM 2)</scope>
    <source>
        <tissue>Amygdala</tissue>
    </source>
</reference>
<reference key="4">
    <citation type="journal article" date="2005" name="Nature">
        <title>Generation and annotation of the DNA sequences of human chromosomes 2 and 4.</title>
        <authorList>
            <person name="Hillier L.W."/>
            <person name="Graves T.A."/>
            <person name="Fulton R.S."/>
            <person name="Fulton L.A."/>
            <person name="Pepin K.H."/>
            <person name="Minx P."/>
            <person name="Wagner-McPherson C."/>
            <person name="Layman D."/>
            <person name="Wylie K."/>
            <person name="Sekhon M."/>
            <person name="Becker M.C."/>
            <person name="Fewell G.A."/>
            <person name="Delehaunty K.D."/>
            <person name="Miner T.L."/>
            <person name="Nash W.E."/>
            <person name="Kremitzki C."/>
            <person name="Oddy L."/>
            <person name="Du H."/>
            <person name="Sun H."/>
            <person name="Bradshaw-Cordum H."/>
            <person name="Ali J."/>
            <person name="Carter J."/>
            <person name="Cordes M."/>
            <person name="Harris A."/>
            <person name="Isak A."/>
            <person name="van Brunt A."/>
            <person name="Nguyen C."/>
            <person name="Du F."/>
            <person name="Courtney L."/>
            <person name="Kalicki J."/>
            <person name="Ozersky P."/>
            <person name="Abbott S."/>
            <person name="Armstrong J."/>
            <person name="Belter E.A."/>
            <person name="Caruso L."/>
            <person name="Cedroni M."/>
            <person name="Cotton M."/>
            <person name="Davidson T."/>
            <person name="Desai A."/>
            <person name="Elliott G."/>
            <person name="Erb T."/>
            <person name="Fronick C."/>
            <person name="Gaige T."/>
            <person name="Haakenson W."/>
            <person name="Haglund K."/>
            <person name="Holmes A."/>
            <person name="Harkins R."/>
            <person name="Kim K."/>
            <person name="Kruchowski S.S."/>
            <person name="Strong C.M."/>
            <person name="Grewal N."/>
            <person name="Goyea E."/>
            <person name="Hou S."/>
            <person name="Levy A."/>
            <person name="Martinka S."/>
            <person name="Mead K."/>
            <person name="McLellan M.D."/>
            <person name="Meyer R."/>
            <person name="Randall-Maher J."/>
            <person name="Tomlinson C."/>
            <person name="Dauphin-Kohlberg S."/>
            <person name="Kozlowicz-Reilly A."/>
            <person name="Shah N."/>
            <person name="Swearengen-Shahid S."/>
            <person name="Snider J."/>
            <person name="Strong J.T."/>
            <person name="Thompson J."/>
            <person name="Yoakum M."/>
            <person name="Leonard S."/>
            <person name="Pearman C."/>
            <person name="Trani L."/>
            <person name="Radionenko M."/>
            <person name="Waligorski J.E."/>
            <person name="Wang C."/>
            <person name="Rock S.M."/>
            <person name="Tin-Wollam A.-M."/>
            <person name="Maupin R."/>
            <person name="Latreille P."/>
            <person name="Wendl M.C."/>
            <person name="Yang S.-P."/>
            <person name="Pohl C."/>
            <person name="Wallis J.W."/>
            <person name="Spieth J."/>
            <person name="Bieri T.A."/>
            <person name="Berkowicz N."/>
            <person name="Nelson J.O."/>
            <person name="Osborne J."/>
            <person name="Ding L."/>
            <person name="Meyer R."/>
            <person name="Sabo A."/>
            <person name="Shotland Y."/>
            <person name="Sinha P."/>
            <person name="Wohldmann P.E."/>
            <person name="Cook L.L."/>
            <person name="Hickenbotham M.T."/>
            <person name="Eldred J."/>
            <person name="Williams D."/>
            <person name="Jones T.A."/>
            <person name="She X."/>
            <person name="Ciccarelli F.D."/>
            <person name="Izaurralde E."/>
            <person name="Taylor J."/>
            <person name="Schmutz J."/>
            <person name="Myers R.M."/>
            <person name="Cox D.R."/>
            <person name="Huang X."/>
            <person name="McPherson J.D."/>
            <person name="Mardis E.R."/>
            <person name="Clifton S.W."/>
            <person name="Warren W.C."/>
            <person name="Chinwalla A.T."/>
            <person name="Eddy S.R."/>
            <person name="Marra M.A."/>
            <person name="Ovcharenko I."/>
            <person name="Furey T.S."/>
            <person name="Miller W."/>
            <person name="Eichler E.E."/>
            <person name="Bork P."/>
            <person name="Suyama M."/>
            <person name="Torrents D."/>
            <person name="Waterston R.H."/>
            <person name="Wilson R.K."/>
        </authorList>
    </citation>
    <scope>NUCLEOTIDE SEQUENCE [LARGE SCALE GENOMIC DNA]</scope>
</reference>
<reference key="5">
    <citation type="submission" date="2005-09" db="EMBL/GenBank/DDBJ databases">
        <authorList>
            <person name="Mural R.J."/>
            <person name="Istrail S."/>
            <person name="Sutton G.G."/>
            <person name="Florea L."/>
            <person name="Halpern A.L."/>
            <person name="Mobarry C.M."/>
            <person name="Lippert R."/>
            <person name="Walenz B."/>
            <person name="Shatkay H."/>
            <person name="Dew I."/>
            <person name="Miller J.R."/>
            <person name="Flanigan M.J."/>
            <person name="Edwards N.J."/>
            <person name="Bolanos R."/>
            <person name="Fasulo D."/>
            <person name="Halldorsson B.V."/>
            <person name="Hannenhalli S."/>
            <person name="Turner R."/>
            <person name="Yooseph S."/>
            <person name="Lu F."/>
            <person name="Nusskern D.R."/>
            <person name="Shue B.C."/>
            <person name="Zheng X.H."/>
            <person name="Zhong F."/>
            <person name="Delcher A.L."/>
            <person name="Huson D.H."/>
            <person name="Kravitz S.A."/>
            <person name="Mouchard L."/>
            <person name="Reinert K."/>
            <person name="Remington K.A."/>
            <person name="Clark A.G."/>
            <person name="Waterman M.S."/>
            <person name="Eichler E.E."/>
            <person name="Adams M.D."/>
            <person name="Hunkapiller M.W."/>
            <person name="Myers E.W."/>
            <person name="Venter J.C."/>
        </authorList>
    </citation>
    <scope>NUCLEOTIDE SEQUENCE [LARGE SCALE GENOMIC DNA]</scope>
</reference>
<reference key="6">
    <citation type="journal article" date="2003" name="Nat. Biotechnol.">
        <title>Exploring proteomes and analyzing protein processing by mass spectrometric identification of sorted N-terminal peptides.</title>
        <authorList>
            <person name="Gevaert K."/>
            <person name="Goethals M."/>
            <person name="Martens L."/>
            <person name="Van Damme J."/>
            <person name="Staes A."/>
            <person name="Thomas G.R."/>
            <person name="Vandekerckhove J."/>
        </authorList>
    </citation>
    <scope>PROTEIN SEQUENCE OF 1-10</scope>
    <scope>ACETYLATION AT MET-1</scope>
    <source>
        <tissue>Platelet</tissue>
    </source>
</reference>
<reference key="7">
    <citation type="journal article" date="2006" name="Mol. Biol. Cell">
        <title>Interactions between EHD proteins and Rab11-FIP2: a role for EHD3 in early endosomal transport.</title>
        <authorList>
            <person name="Naslavsky N."/>
            <person name="Rahajeng J."/>
            <person name="Sharma M."/>
            <person name="Jovic M."/>
            <person name="Caplan S."/>
        </authorList>
    </citation>
    <scope>FUNCTION</scope>
    <scope>SUBUNIT</scope>
    <scope>INTERACTION WITH RAB11FIP2</scope>
    <scope>ATP-BINDING SITE</scope>
    <scope>MUTAGENESIS OF GLY-65; VAL-203 AND TRP-485</scope>
    <scope>SUBCELLULAR LOCATION</scope>
</reference>
<reference key="8">
    <citation type="journal article" date="2007" name="BMC Cell Biol.">
        <title>Shared as well as distinct roles of EHD proteins revealed by biochemical and functional comparisons in mammalian cells and C. elegans.</title>
        <authorList>
            <person name="George M."/>
            <person name="Ying G."/>
            <person name="Rainey M.A."/>
            <person name="Solomon A."/>
            <person name="Parikh P.T."/>
            <person name="Gao Q."/>
            <person name="Band V."/>
            <person name="Band H."/>
        </authorList>
    </citation>
    <scope>FUNCTION</scope>
    <scope>SUBCELLULAR LOCATION</scope>
    <scope>SUBUNIT</scope>
</reference>
<reference key="9">
    <citation type="journal article" date="2008" name="Traffic">
        <title>A role for EHD4 in the regulation of early endosomal transport.</title>
        <authorList>
            <person name="Sharma M."/>
            <person name="Naslavsky N."/>
            <person name="Caplan S."/>
        </authorList>
    </citation>
    <scope>INTERACTION WITH EHD4</scope>
</reference>
<reference key="10">
    <citation type="journal article" date="2009" name="J. Cell Sci.">
        <title>EHD3 regulates early-endosome-to-Golgi transport and preserves Golgi morphology.</title>
        <authorList>
            <person name="Naslavsky N."/>
            <person name="McKenzie J."/>
            <person name="Altan-Bonnet N."/>
            <person name="Sheff D."/>
            <person name="Caplan S."/>
        </authorList>
    </citation>
    <scope>FUNCTION</scope>
</reference>
<reference key="11">
    <citation type="journal article" date="2009" name="Mol. Biol. Cell">
        <title>MICAL-L1 links EHD1 to tubular recycling endosomes and regulates receptor recycling.</title>
        <authorList>
            <person name="Sharma M."/>
            <person name="Giridharan S.S."/>
            <person name="Rahajeng J."/>
            <person name="Naslavsky N."/>
            <person name="Caplan S."/>
        </authorList>
    </citation>
    <scope>INTERACTION WITH MICALL1</scope>
</reference>
<reference key="12">
    <citation type="journal article" date="2010" name="Circ. Res.">
        <title>EH domain proteins regulate cardiac membrane protein targeting.</title>
        <authorList>
            <person name="Gudmundsson H."/>
            <person name="Hund T.J."/>
            <person name="Wright P.J."/>
            <person name="Kline C.F."/>
            <person name="Snyder J.S."/>
            <person name="Qian L."/>
            <person name="Koval O.M."/>
            <person name="Cunha S.R."/>
            <person name="George M."/>
            <person name="Rainey M.A."/>
            <person name="Kashef F.E."/>
            <person name="Dun W."/>
            <person name="Boyden P.A."/>
            <person name="Anderson M.E."/>
            <person name="Band H."/>
            <person name="Mohler P.J."/>
        </authorList>
    </citation>
    <scope>FUNCTION</scope>
    <scope>INTERACTION WITH ANK2</scope>
    <scope>SUBCELLULAR LOCATION</scope>
</reference>
<reference key="13">
    <citation type="journal article" date="2011" name="Neuron">
        <title>Endocytosis promotes rapid dopaminergic signaling.</title>
        <authorList>
            <person name="Kotowski S.J."/>
            <person name="Hopf F.W."/>
            <person name="Seif T."/>
            <person name="Bonci A."/>
            <person name="von Zastrow M."/>
        </authorList>
    </citation>
    <scope>FUNCTION</scope>
</reference>
<reference key="14">
    <citation type="journal article" date="2013" name="J. Biol. Chem.">
        <title>Differential roles of C-terminal Eps15 homology domain proteins as vesiculators and tubulators of recycling endosomes.</title>
        <authorList>
            <person name="Cai B."/>
            <person name="Giridharan S.S."/>
            <person name="Zhang J."/>
            <person name="Saxena S."/>
            <person name="Bahl K."/>
            <person name="Schmidt J.A."/>
            <person name="Sorgen P.L."/>
            <person name="Guo W."/>
            <person name="Naslavsky N."/>
            <person name="Caplan S."/>
        </authorList>
    </citation>
    <scope>FUNCTION</scope>
</reference>
<reference key="15">
    <citation type="journal article" date="2013" name="J. Cell Sci.">
        <title>Alphavbeta3-integrin-mediated adhesion is regulated through an AAK1L- and EHD3-dependent rapid-recycling pathway.</title>
        <authorList>
            <person name="Waxmonsky N.C."/>
            <person name="Conner S.D."/>
        </authorList>
    </citation>
    <scope>FUNCTION</scope>
</reference>
<reference key="16">
    <citation type="journal article" date="2014" name="J. Proteomics">
        <title>An enzyme assisted RP-RPLC approach for in-depth analysis of human liver phosphoproteome.</title>
        <authorList>
            <person name="Bian Y."/>
            <person name="Song C."/>
            <person name="Cheng K."/>
            <person name="Dong M."/>
            <person name="Wang F."/>
            <person name="Huang J."/>
            <person name="Sun D."/>
            <person name="Wang L."/>
            <person name="Ye M."/>
            <person name="Zou H."/>
        </authorList>
    </citation>
    <scope>IDENTIFICATION BY MASS SPECTROMETRY [LARGE SCALE ANALYSIS]</scope>
    <source>
        <tissue>Liver</tissue>
    </source>
</reference>
<reference key="17">
    <citation type="journal article" date="2015" name="Nat. Cell Biol.">
        <title>Early steps in primary cilium assembly require EHD1/EHD3-dependent ciliary vesicle formation.</title>
        <authorList>
            <person name="Lu Q."/>
            <person name="Insinna C."/>
            <person name="Ott C."/>
            <person name="Stauffer J."/>
            <person name="Pintado P.A."/>
            <person name="Rahajeng J."/>
            <person name="Baxa U."/>
            <person name="Walia V."/>
            <person name="Cuenca A."/>
            <person name="Hwang Y.S."/>
            <person name="Daar I.O."/>
            <person name="Lopes S."/>
            <person name="Lippincott-Schwartz J."/>
            <person name="Jackson P.K."/>
            <person name="Caplan S."/>
            <person name="Westlake C.J."/>
        </authorList>
    </citation>
    <scope>FUNCTION</scope>
    <scope>SUBCELLULAR LOCATION</scope>
</reference>
<reference key="18">
    <citation type="journal article" date="2015" name="Nat. Cell Biol.">
        <authorList>
            <person name="Lu Q."/>
            <person name="Insinna C."/>
            <person name="Ott C."/>
            <person name="Stauffer J."/>
            <person name="Pintado P.A."/>
            <person name="Rahajeng J."/>
            <person name="Baxa U."/>
            <person name="Walia V."/>
            <person name="Cuenca A."/>
            <person name="Hwang Y.S."/>
            <person name="Daar I.O."/>
            <person name="Lopes S."/>
            <person name="Lippincott-Schwartz J."/>
            <person name="Jackson P.K."/>
            <person name="Caplan S."/>
            <person name="Westlake C.J."/>
        </authorList>
    </citation>
    <scope>ERRATUM OF PUBMED:25686250</scope>
</reference>
<reference key="19">
    <citation type="journal article" date="2015" name="PLoS ONE">
        <title>SUMOylation of EHD3 Modulates Tubulation of the Endocytic Recycling Compartment.</title>
        <authorList>
            <person name="Cabasso O."/>
            <person name="Pekar O."/>
            <person name="Horowitz M."/>
        </authorList>
    </citation>
    <scope>SUMOYLATION</scope>
    <scope>MUTAGENESIS OF LYS-315 AND LYS-511</scope>
</reference>
<reference key="20">
    <citation type="journal article" date="2015" name="Proteomics">
        <title>N-terminome analysis of the human mitochondrial proteome.</title>
        <authorList>
            <person name="Vaca Jacome A.S."/>
            <person name="Rabilloud T."/>
            <person name="Schaeffer-Reiss C."/>
            <person name="Rompais M."/>
            <person name="Ayoub D."/>
            <person name="Lane L."/>
            <person name="Bairoch A."/>
            <person name="Van Dorsselaer A."/>
            <person name="Carapito C."/>
        </authorList>
    </citation>
    <scope>IDENTIFICATION BY MASS SPECTROMETRY [LARGE SCALE ANALYSIS]</scope>
</reference>
<reference key="21">
    <citation type="journal article" date="2014" name="Biomol. NMR. Assign.">
        <title>Chemical shift assignments of the C-terminal Eps15 homology domain-3 EH domain.</title>
        <authorList>
            <person name="Spagnol G."/>
            <person name="Reiling C."/>
            <person name="Kieken F."/>
            <person name="Caplan S."/>
            <person name="Sorgen P.L."/>
        </authorList>
    </citation>
    <scope>STRUCTURE BY NMR OF 433-535</scope>
</reference>
<protein>
    <recommendedName>
        <fullName evidence="24">EH domain-containing protein 3</fullName>
    </recommendedName>
    <alternativeName>
        <fullName evidence="24">PAST homolog 3</fullName>
    </alternativeName>
</protein>
<accession>Q9NZN3</accession>
<accession>B4DFR5</accession>
<accession>D6W574</accession>
<accession>Q8N514</accession>
<accession>Q9NZB3</accession>
<dbReference type="EMBL" id="AF181264">
    <property type="protein sequence ID" value="AAF40471.1"/>
    <property type="status" value="ALT_FRAME"/>
    <property type="molecule type" value="mRNA"/>
</dbReference>
<dbReference type="EMBL" id="AF214736">
    <property type="protein sequence ID" value="AAF32285.1"/>
    <property type="molecule type" value="mRNA"/>
</dbReference>
<dbReference type="EMBL" id="AK294222">
    <property type="protein sequence ID" value="BAG57526.1"/>
    <property type="molecule type" value="mRNA"/>
</dbReference>
<dbReference type="EMBL" id="AK316006">
    <property type="protein sequence ID" value="BAH14377.1"/>
    <property type="molecule type" value="mRNA"/>
</dbReference>
<dbReference type="EMBL" id="AL121657">
    <property type="status" value="NOT_ANNOTATED_CDS"/>
    <property type="molecule type" value="Genomic_DNA"/>
</dbReference>
<dbReference type="EMBL" id="CH471053">
    <property type="protein sequence ID" value="EAX00480.1"/>
    <property type="molecule type" value="Genomic_DNA"/>
</dbReference>
<dbReference type="EMBL" id="CH471053">
    <property type="protein sequence ID" value="EAX00481.1"/>
    <property type="molecule type" value="Genomic_DNA"/>
</dbReference>
<dbReference type="CCDS" id="CCDS1774.1">
    <molecule id="Q9NZN3-1"/>
</dbReference>
<dbReference type="RefSeq" id="NP_055415.1">
    <molecule id="Q9NZN3-1"/>
    <property type="nucleotide sequence ID" value="NM_014600.3"/>
</dbReference>
<dbReference type="BMRB" id="Q9NZN3"/>
<dbReference type="SMR" id="Q9NZN3"/>
<dbReference type="BioGRID" id="119055">
    <property type="interactions" value="34"/>
</dbReference>
<dbReference type="FunCoup" id="Q9NZN3">
    <property type="interactions" value="1799"/>
</dbReference>
<dbReference type="IntAct" id="Q9NZN3">
    <property type="interactions" value="18"/>
</dbReference>
<dbReference type="MINT" id="Q9NZN3"/>
<dbReference type="STRING" id="9606.ENSP00000327116"/>
<dbReference type="iPTMnet" id="Q9NZN3"/>
<dbReference type="MetOSite" id="Q9NZN3"/>
<dbReference type="PhosphoSitePlus" id="Q9NZN3"/>
<dbReference type="SwissPalm" id="Q9NZN3"/>
<dbReference type="BioMuta" id="EHD3"/>
<dbReference type="DMDM" id="300669636"/>
<dbReference type="OGP" id="Q9NZN3"/>
<dbReference type="jPOST" id="Q9NZN3"/>
<dbReference type="MassIVE" id="Q9NZN3"/>
<dbReference type="PaxDb" id="9606-ENSP00000327116"/>
<dbReference type="PeptideAtlas" id="Q9NZN3"/>
<dbReference type="ProteomicsDB" id="4072"/>
<dbReference type="ProteomicsDB" id="83458">
    <molecule id="Q9NZN3-1"/>
</dbReference>
<dbReference type="Pumba" id="Q9NZN3"/>
<dbReference type="Antibodypedia" id="29084">
    <property type="antibodies" value="153 antibodies from 30 providers"/>
</dbReference>
<dbReference type="DNASU" id="30845"/>
<dbReference type="Ensembl" id="ENST00000322054.10">
    <molecule id="Q9NZN3-1"/>
    <property type="protein sequence ID" value="ENSP00000327116.5"/>
    <property type="gene ID" value="ENSG00000013016.16"/>
</dbReference>
<dbReference type="GeneID" id="30845"/>
<dbReference type="KEGG" id="hsa:30845"/>
<dbReference type="MANE-Select" id="ENST00000322054.10">
    <property type="protein sequence ID" value="ENSP00000327116.5"/>
    <property type="RefSeq nucleotide sequence ID" value="NM_014600.3"/>
    <property type="RefSeq protein sequence ID" value="NP_055415.1"/>
</dbReference>
<dbReference type="UCSC" id="uc002rnu.4">
    <molecule id="Q9NZN3-1"/>
    <property type="organism name" value="human"/>
</dbReference>
<dbReference type="AGR" id="HGNC:3244"/>
<dbReference type="CTD" id="30845"/>
<dbReference type="DisGeNET" id="30845"/>
<dbReference type="GeneCards" id="EHD3"/>
<dbReference type="HGNC" id="HGNC:3244">
    <property type="gene designation" value="EHD3"/>
</dbReference>
<dbReference type="HPA" id="ENSG00000013016">
    <property type="expression patterns" value="Tissue enhanced (brain, esophagus)"/>
</dbReference>
<dbReference type="MIM" id="605891">
    <property type="type" value="gene"/>
</dbReference>
<dbReference type="neXtProt" id="NX_Q9NZN3"/>
<dbReference type="OpenTargets" id="ENSG00000013016"/>
<dbReference type="PharmGKB" id="PA27679"/>
<dbReference type="VEuPathDB" id="HostDB:ENSG00000013016"/>
<dbReference type="eggNOG" id="KOG1954">
    <property type="taxonomic scope" value="Eukaryota"/>
</dbReference>
<dbReference type="GeneTree" id="ENSGT00940000159274"/>
<dbReference type="HOGENOM" id="CLU_017595_1_1_1"/>
<dbReference type="InParanoid" id="Q9NZN3"/>
<dbReference type="OMA" id="LMIGQYS"/>
<dbReference type="OrthoDB" id="1716625at2759"/>
<dbReference type="PAN-GO" id="Q9NZN3">
    <property type="GO annotations" value="10 GO annotations based on evolutionary models"/>
</dbReference>
<dbReference type="PhylomeDB" id="Q9NZN3"/>
<dbReference type="TreeFam" id="TF314429"/>
<dbReference type="PathwayCommons" id="Q9NZN3"/>
<dbReference type="Reactome" id="R-HSA-983231">
    <property type="pathway name" value="Factors involved in megakaryocyte development and platelet production"/>
</dbReference>
<dbReference type="SignaLink" id="Q9NZN3"/>
<dbReference type="BioGRID-ORCS" id="30845">
    <property type="hits" value="12 hits in 1149 CRISPR screens"/>
</dbReference>
<dbReference type="CD-CODE" id="91857CE7">
    <property type="entry name" value="Nucleolus"/>
</dbReference>
<dbReference type="CD-CODE" id="FB4E32DD">
    <property type="entry name" value="Presynaptic clusters and postsynaptic densities"/>
</dbReference>
<dbReference type="ChiTaRS" id="EHD3">
    <property type="organism name" value="human"/>
</dbReference>
<dbReference type="GenomeRNAi" id="30845"/>
<dbReference type="Pharos" id="Q9NZN3">
    <property type="development level" value="Tbio"/>
</dbReference>
<dbReference type="PRO" id="PR:Q9NZN3"/>
<dbReference type="Proteomes" id="UP000005640">
    <property type="component" value="Chromosome 2"/>
</dbReference>
<dbReference type="RNAct" id="Q9NZN3">
    <property type="molecule type" value="protein"/>
</dbReference>
<dbReference type="Bgee" id="ENSG00000013016">
    <property type="expression patterns" value="Expressed in lateral nuclear group of thalamus and 174 other cell types or tissues"/>
</dbReference>
<dbReference type="GO" id="GO:0020018">
    <property type="term" value="C:ciliary pocket membrane"/>
    <property type="evidence" value="ECO:0000314"/>
    <property type="project" value="UniProtKB"/>
</dbReference>
<dbReference type="GO" id="GO:0005737">
    <property type="term" value="C:cytoplasm"/>
    <property type="evidence" value="ECO:0000250"/>
    <property type="project" value="UniProtKB"/>
</dbReference>
<dbReference type="GO" id="GO:0005829">
    <property type="term" value="C:cytosol"/>
    <property type="evidence" value="ECO:0007669"/>
    <property type="project" value="GOC"/>
</dbReference>
<dbReference type="GO" id="GO:0005769">
    <property type="term" value="C:early endosome"/>
    <property type="evidence" value="ECO:0000318"/>
    <property type="project" value="GO_Central"/>
</dbReference>
<dbReference type="GO" id="GO:0030139">
    <property type="term" value="C:endocytic vesicle"/>
    <property type="evidence" value="ECO:0000318"/>
    <property type="project" value="GO_Central"/>
</dbReference>
<dbReference type="GO" id="GO:0010008">
    <property type="term" value="C:endosome membrane"/>
    <property type="evidence" value="ECO:0000304"/>
    <property type="project" value="Reactome"/>
</dbReference>
<dbReference type="GO" id="GO:0005925">
    <property type="term" value="C:focal adhesion"/>
    <property type="evidence" value="ECO:0007005"/>
    <property type="project" value="UniProtKB"/>
</dbReference>
<dbReference type="GO" id="GO:0005634">
    <property type="term" value="C:nucleus"/>
    <property type="evidence" value="ECO:0000304"/>
    <property type="project" value="ProtInc"/>
</dbReference>
<dbReference type="GO" id="GO:0048471">
    <property type="term" value="C:perinuclear region of cytoplasm"/>
    <property type="evidence" value="ECO:0000318"/>
    <property type="project" value="GO_Central"/>
</dbReference>
<dbReference type="GO" id="GO:0005886">
    <property type="term" value="C:plasma membrane"/>
    <property type="evidence" value="ECO:0000318"/>
    <property type="project" value="GO_Central"/>
</dbReference>
<dbReference type="GO" id="GO:0055038">
    <property type="term" value="C:recycling endosome membrane"/>
    <property type="evidence" value="ECO:0000314"/>
    <property type="project" value="UniProtKB"/>
</dbReference>
<dbReference type="GO" id="GO:0005524">
    <property type="term" value="F:ATP binding"/>
    <property type="evidence" value="ECO:0007669"/>
    <property type="project" value="UniProtKB-KW"/>
</dbReference>
<dbReference type="GO" id="GO:0005509">
    <property type="term" value="F:calcium ion binding"/>
    <property type="evidence" value="ECO:0007669"/>
    <property type="project" value="InterPro"/>
</dbReference>
<dbReference type="GO" id="GO:0005525">
    <property type="term" value="F:GTP binding"/>
    <property type="evidence" value="ECO:0007669"/>
    <property type="project" value="InterPro"/>
</dbReference>
<dbReference type="GO" id="GO:0003676">
    <property type="term" value="F:nucleic acid binding"/>
    <property type="evidence" value="ECO:0000304"/>
    <property type="project" value="ProtInc"/>
</dbReference>
<dbReference type="GO" id="GO:0060271">
    <property type="term" value="P:cilium assembly"/>
    <property type="evidence" value="ECO:0000315"/>
    <property type="project" value="UniProtKB"/>
</dbReference>
<dbReference type="GO" id="GO:0034498">
    <property type="term" value="P:early endosome to Golgi transport"/>
    <property type="evidence" value="ECO:0000315"/>
    <property type="project" value="UniProtKB"/>
</dbReference>
<dbReference type="GO" id="GO:0032456">
    <property type="term" value="P:endocytic recycling"/>
    <property type="evidence" value="ECO:0000314"/>
    <property type="project" value="UniProtKB"/>
</dbReference>
<dbReference type="GO" id="GO:0006897">
    <property type="term" value="P:endocytosis"/>
    <property type="evidence" value="ECO:0000318"/>
    <property type="project" value="GO_Central"/>
</dbReference>
<dbReference type="GO" id="GO:0090160">
    <property type="term" value="P:Golgi to lysosome transport"/>
    <property type="evidence" value="ECO:0000315"/>
    <property type="project" value="UniProtKB"/>
</dbReference>
<dbReference type="GO" id="GO:0051260">
    <property type="term" value="P:protein homooligomerization"/>
    <property type="evidence" value="ECO:0000353"/>
    <property type="project" value="UniProtKB"/>
</dbReference>
<dbReference type="GO" id="GO:0072659">
    <property type="term" value="P:protein localization to plasma membrane"/>
    <property type="evidence" value="ECO:0000316"/>
    <property type="project" value="MGI"/>
</dbReference>
<dbReference type="GO" id="GO:0015031">
    <property type="term" value="P:protein transport"/>
    <property type="evidence" value="ECO:0007669"/>
    <property type="project" value="UniProtKB-KW"/>
</dbReference>
<dbReference type="GO" id="GO:0001881">
    <property type="term" value="P:receptor recycling"/>
    <property type="evidence" value="ECO:0000315"/>
    <property type="project" value="UniProtKB"/>
</dbReference>
<dbReference type="GO" id="GO:1903779">
    <property type="term" value="P:regulation of cardiac conduction"/>
    <property type="evidence" value="ECO:0007669"/>
    <property type="project" value="Ensembl"/>
</dbReference>
<dbReference type="GO" id="GO:0086036">
    <property type="term" value="P:regulation of cardiac muscle cell membrane potential"/>
    <property type="evidence" value="ECO:0000316"/>
    <property type="project" value="MGI"/>
</dbReference>
<dbReference type="GO" id="GO:0055117">
    <property type="term" value="P:regulation of cardiac muscle contraction"/>
    <property type="evidence" value="ECO:0007669"/>
    <property type="project" value="Ensembl"/>
</dbReference>
<dbReference type="GO" id="GO:1903358">
    <property type="term" value="P:regulation of Golgi organization"/>
    <property type="evidence" value="ECO:0000315"/>
    <property type="project" value="UniProtKB"/>
</dbReference>
<dbReference type="CDD" id="cd00052">
    <property type="entry name" value="EH"/>
    <property type="match status" value="1"/>
</dbReference>
<dbReference type="CDD" id="cd09913">
    <property type="entry name" value="EHD"/>
    <property type="match status" value="1"/>
</dbReference>
<dbReference type="FunFam" id="3.40.50.300:FF:000147">
    <property type="entry name" value="EH domain-containing protein 1"/>
    <property type="match status" value="1"/>
</dbReference>
<dbReference type="FunFam" id="1.10.238.10:FF:000038">
    <property type="entry name" value="EH domain-containing protein 3"/>
    <property type="match status" value="1"/>
</dbReference>
<dbReference type="Gene3D" id="1.10.268.20">
    <property type="match status" value="1"/>
</dbReference>
<dbReference type="Gene3D" id="1.10.238.10">
    <property type="entry name" value="EF-hand"/>
    <property type="match status" value="1"/>
</dbReference>
<dbReference type="Gene3D" id="3.40.50.300">
    <property type="entry name" value="P-loop containing nucleotide triphosphate hydrolases"/>
    <property type="match status" value="1"/>
</dbReference>
<dbReference type="InterPro" id="IPR040990">
    <property type="entry name" value="DUF5600"/>
</dbReference>
<dbReference type="InterPro" id="IPR045063">
    <property type="entry name" value="Dynamin_N"/>
</dbReference>
<dbReference type="InterPro" id="IPR011992">
    <property type="entry name" value="EF-hand-dom_pair"/>
</dbReference>
<dbReference type="InterPro" id="IPR018247">
    <property type="entry name" value="EF_Hand_1_Ca_BS"/>
</dbReference>
<dbReference type="InterPro" id="IPR002048">
    <property type="entry name" value="EF_hand_dom"/>
</dbReference>
<dbReference type="InterPro" id="IPR000261">
    <property type="entry name" value="EH_dom"/>
</dbReference>
<dbReference type="InterPro" id="IPR031692">
    <property type="entry name" value="EHD_N"/>
</dbReference>
<dbReference type="InterPro" id="IPR030381">
    <property type="entry name" value="G_DYNAMIN_dom"/>
</dbReference>
<dbReference type="InterPro" id="IPR027417">
    <property type="entry name" value="P-loop_NTPase"/>
</dbReference>
<dbReference type="PANTHER" id="PTHR11216:SF170">
    <property type="entry name" value="DYNAMIN ASSOCIATED PROTEIN 160, ISOFORM D"/>
    <property type="match status" value="1"/>
</dbReference>
<dbReference type="PANTHER" id="PTHR11216">
    <property type="entry name" value="EH DOMAIN"/>
    <property type="match status" value="1"/>
</dbReference>
<dbReference type="Pfam" id="PF18150">
    <property type="entry name" value="DUF5600"/>
    <property type="match status" value="1"/>
</dbReference>
<dbReference type="Pfam" id="PF00350">
    <property type="entry name" value="Dynamin_N"/>
    <property type="match status" value="1"/>
</dbReference>
<dbReference type="Pfam" id="PF12763">
    <property type="entry name" value="EH"/>
    <property type="match status" value="1"/>
</dbReference>
<dbReference type="Pfam" id="PF16880">
    <property type="entry name" value="EHD_N"/>
    <property type="match status" value="1"/>
</dbReference>
<dbReference type="SMART" id="SM00027">
    <property type="entry name" value="EH"/>
    <property type="match status" value="1"/>
</dbReference>
<dbReference type="SUPFAM" id="SSF47473">
    <property type="entry name" value="EF-hand"/>
    <property type="match status" value="1"/>
</dbReference>
<dbReference type="SUPFAM" id="SSF52540">
    <property type="entry name" value="P-loop containing nucleoside triphosphate hydrolases"/>
    <property type="match status" value="1"/>
</dbReference>
<dbReference type="PROSITE" id="PS00018">
    <property type="entry name" value="EF_HAND_1"/>
    <property type="match status" value="1"/>
</dbReference>
<dbReference type="PROSITE" id="PS50222">
    <property type="entry name" value="EF_HAND_2"/>
    <property type="match status" value="1"/>
</dbReference>
<dbReference type="PROSITE" id="PS50031">
    <property type="entry name" value="EH"/>
    <property type="match status" value="1"/>
</dbReference>
<dbReference type="PROSITE" id="PS51718">
    <property type="entry name" value="G_DYNAMIN_2"/>
    <property type="match status" value="1"/>
</dbReference>
<gene>
    <name evidence="26" type="primary">EHD3</name>
    <name evidence="22" type="synonym">EHD2</name>
    <name evidence="26" type="synonym">PAST3</name>
</gene>
<comment type="function">
    <text evidence="3 11 12 14 17 18 19 20 25">ATP- and membrane-binding protein that controls membrane reorganization/tubulation upon ATP hydrolysis (PubMed:25686250). In vitro causes tubulation of endocytic membranes (PubMed:24019528). Binding to phosphatidic acid induces its membrane tubulation activity (By similarity). Plays a role in endocytic transport. Involved in early endosome to recycling endosome compartment (ERC), retrograde early endosome to Golgi, and endosome to plasma membrane (rapid recycling) protein transport. Involved in the regulation of Golgi maintenance and morphology (PubMed:16251358, PubMed:17233914, PubMed:19139087, PubMed:23781025). Involved in the recycling of internalized D1 dopamine receptor (PubMed:21791287). Plays a role in cardiac protein trafficking probably implicating ANK2 (PubMed:20489164). Involved in the ventricular membrane targeting of SLC8A1 and CACNA1C and probably the atrial membrane localization of CACNA1GG and CACNA1H implicated in the regulation of atrial myocyte excitability and cardiac conduction (By similarity). In conjunction with EHD4 may be involved in endocytic trafficking of KDR/VEGFR2 implicated in control of glomerular function (By similarity). Involved in the rapid recycling of integrin beta-3 implicated in cell adhesion maintenance (PubMed:23781025). Involved in the unidirectional retrograde dendritic transport of endocytosed BACE1 and in efficient sorting of BACE1 to axons implicating a function in neuronal APP processing (By similarity). Plays a role in the formation of the ciliary vesicle, an early step in cilium biogenesis; possibly sharing redundant functions with EHD1 (PubMed:25686250).</text>
</comment>
<comment type="subunit">
    <text evidence="3 11 12 13 15 16">Homooligomer, and heterooligomer with EHD1, EHD2 and EHD4, ATP-binding is required for heterooligomerization (PubMed:16251358, PubMed:17233914). Interacts with PACSIN1 (By similarity). Interacts with PACSIN2 (By similarity). Interacts (via EH domain) with MICALL1 (PubMed:19864458). Interacts (via EH domain) with RAB11FIP2 (PubMed:16251358). Interacts with ANK2 (PubMed:20489164).</text>
</comment>
<comment type="interaction">
    <interactant intactId="EBI-2870749">
        <id>Q9NZN3</id>
    </interactant>
    <interactant intactId="EBI-941975">
        <id>Q01484</id>
        <label>ANK2</label>
    </interactant>
    <organismsDiffer>false</organismsDiffer>
    <experiments>2</experiments>
</comment>
<comment type="interaction">
    <interactant intactId="EBI-2870749">
        <id>Q9NZN3</id>
    </interactant>
    <interactant intactId="EBI-2513908">
        <id>Q9P2R3</id>
        <label>ANKFY1</label>
    </interactant>
    <organismsDiffer>false</organismsDiffer>
    <experiments>3</experiments>
</comment>
<comment type="interaction">
    <interactant intactId="EBI-2870749">
        <id>Q9NZN3</id>
    </interactant>
    <interactant intactId="EBI-714543">
        <id>Q15041</id>
        <label>ARL6IP1</label>
    </interactant>
    <organismsDiffer>false</organismsDiffer>
    <experiments>3</experiments>
</comment>
<comment type="interaction">
    <interactant intactId="EBI-2870749">
        <id>Q9NZN3</id>
    </interactant>
    <interactant intactId="EBI-490691">
        <id>Q9H4M9</id>
        <label>EHD1</label>
    </interactant>
    <organismsDiffer>false</organismsDiffer>
    <experiments>9</experiments>
</comment>
<comment type="interaction">
    <interactant intactId="EBI-2870749">
        <id>Q9NZN3</id>
    </interactant>
    <interactant intactId="EBI-1056885">
        <id>Q8N3F8</id>
        <label>MICALL1</label>
    </interactant>
    <organismsDiffer>false</organismsDiffer>
    <experiments>6</experiments>
</comment>
<comment type="interaction">
    <interactant intactId="EBI-2870749">
        <id>Q9NZN3</id>
    </interactant>
    <interactant intactId="EBI-1105310">
        <id>Q9H1K0</id>
        <label>RBSN</label>
    </interactant>
    <organismsDiffer>false</organismsDiffer>
    <experiments>3</experiments>
</comment>
<comment type="interaction">
    <interactant intactId="EBI-2870749">
        <id>Q9NZN3</id>
    </interactant>
    <interactant intactId="EBI-775304">
        <id>Q9QXY6</id>
        <label>Ehd3</label>
    </interactant>
    <organismsDiffer>true</organismsDiffer>
    <experiments>5</experiments>
</comment>
<comment type="subcellular location">
    <subcellularLocation>
        <location evidence="12">Recycling endosome membrane</location>
        <topology evidence="24">Peripheral membrane protein</topology>
        <orientation evidence="24">Cytoplasmic side</orientation>
    </subcellularLocation>
    <subcellularLocation>
        <location evidence="12">Cell membrane</location>
        <topology evidence="24">Peripheral membrane protein</topology>
        <orientation evidence="24">Cytoplasmic side</orientation>
    </subcellularLocation>
    <subcellularLocation>
        <location evidence="20">Cell projection</location>
        <location evidence="20">Cilium membrane</location>
        <topology evidence="24">Peripheral membrane protein</topology>
        <orientation evidence="24">Cytoplasmic side</orientation>
    </subcellularLocation>
    <text evidence="3 16 20">Localizes to the ciliary pocket from where the cilium protrudes (PubMed:25686250). Colocalizes with RAB8A and MYO5B to a cytoplasmic tubular network devoid of RAB11A (By similarity). Colocalizes with ANK2 in myocyte perinuclear region (PubMed:20489164). Colocalizes with BACE1 in tubulovesicular cytoplasmic membranes. Colocalizes with BACE1 and APP amyloid beta proteins in hippocampal mossy fiber terminals (By similarity).</text>
</comment>
<comment type="alternative products">
    <event type="alternative splicing"/>
    <isoform>
        <id>Q9NZN3-1</id>
        <name>1</name>
        <sequence type="displayed"/>
    </isoform>
    <isoform>
        <id>Q9NZN3-2</id>
        <name>2</name>
        <sequence type="described" ref="VSP_056606 VSP_056607"/>
    </isoform>
</comment>
<comment type="tissue specificity">
    <text evidence="9">Highly expressed in heart and brain and moderately expressed in kidney, liver, and placenta.</text>
</comment>
<comment type="domain">
    <text evidence="4">The EH domain interacts with Asn-Pro-Phe (NPF) motifs of target proteins.</text>
</comment>
<comment type="similarity">
    <text evidence="8">Belongs to the TRAFAC class dynamin-like GTPase superfamily. Dynamin/Fzo/YdjA family. EHD subfamily.</text>
</comment>
<comment type="sequence caution" evidence="24">
    <conflict type="frameshift">
        <sequence resource="EMBL-CDS" id="AAF40471"/>
    </conflict>
</comment>
<evidence type="ECO:0000250" key="1">
    <source>
        <dbReference type="UniProtKB" id="Q8BH64"/>
    </source>
</evidence>
<evidence type="ECO:0000250" key="2">
    <source>
        <dbReference type="UniProtKB" id="Q8R491"/>
    </source>
</evidence>
<evidence type="ECO:0000250" key="3">
    <source>
        <dbReference type="UniProtKB" id="Q9QXY6"/>
    </source>
</evidence>
<evidence type="ECO:0000250" key="4">
    <source>
        <dbReference type="UniProtKB" id="Q9WVK4"/>
    </source>
</evidence>
<evidence type="ECO:0000255" key="5"/>
<evidence type="ECO:0000255" key="6">
    <source>
        <dbReference type="PROSITE-ProRule" id="PRU00077"/>
    </source>
</evidence>
<evidence type="ECO:0000255" key="7">
    <source>
        <dbReference type="PROSITE-ProRule" id="PRU00448"/>
    </source>
</evidence>
<evidence type="ECO:0000255" key="8">
    <source>
        <dbReference type="PROSITE-ProRule" id="PRU01055"/>
    </source>
</evidence>
<evidence type="ECO:0000269" key="9">
    <source>
    </source>
</evidence>
<evidence type="ECO:0000269" key="10">
    <source>
    </source>
</evidence>
<evidence type="ECO:0000269" key="11">
    <source>
    </source>
</evidence>
<evidence type="ECO:0000269" key="12">
    <source>
    </source>
</evidence>
<evidence type="ECO:0000269" key="13">
    <source>
    </source>
</evidence>
<evidence type="ECO:0000269" key="14">
    <source>
    </source>
</evidence>
<evidence type="ECO:0000269" key="15">
    <source>
    </source>
</evidence>
<evidence type="ECO:0000269" key="16">
    <source>
    </source>
</evidence>
<evidence type="ECO:0000269" key="17">
    <source>
    </source>
</evidence>
<evidence type="ECO:0000269" key="18">
    <source>
    </source>
</evidence>
<evidence type="ECO:0000269" key="19">
    <source>
    </source>
</evidence>
<evidence type="ECO:0000269" key="20">
    <source>
    </source>
</evidence>
<evidence type="ECO:0000269" key="21">
    <source>
    </source>
</evidence>
<evidence type="ECO:0000303" key="22">
    <source>
    </source>
</evidence>
<evidence type="ECO:0000303" key="23">
    <source>
    </source>
</evidence>
<evidence type="ECO:0000305" key="24"/>
<evidence type="ECO:0000305" key="25">
    <source>
    </source>
</evidence>
<evidence type="ECO:0000312" key="26">
    <source>
        <dbReference type="HGNC" id="HGNC:3244"/>
    </source>
</evidence>
<sequence length="535" mass="60887">MFSWLGTDDRRRKDPEVFQTVSEGLKKLYKSKLLPLEEHYRFHEFHSPALEDADFDNKPMVLLVGQYSTGKTTFIRYLLEQDFPGMRIGPEPTTDSFIAVMQGDMEGIIPGNALVVDPKKPFRKLNAFGNAFLNRFVCAQLPNPVLESISVIDTPGILSGEKQRISRGYDFAAVLEWFAERVDRIILLFDAHKLDISDEFSEVIKALKNHEDKMRVVLNKADQIETQQLMRVYGALMWSLGKIVNTPEVIRVYIGSFWSHPLLIPDNRKLFEAEEQDLFRDIQSLPRNAALRKLNDLIKRARLAKVHAYIISSLKKEMPSVFGKDNKKKELVNNLAEIYGRIEREHQISPGDFPNLKRMQDQLQAQDFSKFQPLKSKLLEVVDDMLAHDIAQLMVLVRQEESQRPIQMVKGGAFEGTLHGPFGHGYGEGAGEGIDDAEWVVARDKPMYDEIFYTLSPVDGKITGANAKKEMVRSKLPNSVLGKIWKLADIDKDGMLDDDEFALANHLIKVKLEGHELPNELPAHLLPPSKRKVAE</sequence>
<name>EHD3_HUMAN</name>
<keyword id="KW-0007">Acetylation</keyword>
<keyword id="KW-0025">Alternative splicing</keyword>
<keyword id="KW-0067">ATP-binding</keyword>
<keyword id="KW-0106">Calcium</keyword>
<keyword id="KW-1003">Cell membrane</keyword>
<keyword id="KW-0966">Cell projection</keyword>
<keyword id="KW-0969">Cilium</keyword>
<keyword id="KW-0970">Cilium biogenesis/degradation</keyword>
<keyword id="KW-0175">Coiled coil</keyword>
<keyword id="KW-0903">Direct protein sequencing</keyword>
<keyword id="KW-0967">Endosome</keyword>
<keyword id="KW-1017">Isopeptide bond</keyword>
<keyword id="KW-0472">Membrane</keyword>
<keyword id="KW-0479">Metal-binding</keyword>
<keyword id="KW-0547">Nucleotide-binding</keyword>
<keyword id="KW-0597">Phosphoprotein</keyword>
<keyword id="KW-0653">Protein transport</keyword>
<keyword id="KW-1267">Proteomics identification</keyword>
<keyword id="KW-1185">Reference proteome</keyword>
<keyword id="KW-0813">Transport</keyword>
<keyword id="KW-0832">Ubl conjugation</keyword>